<evidence type="ECO:0000250" key="1"/>
<evidence type="ECO:0000250" key="2">
    <source>
        <dbReference type="UniProtKB" id="O54924"/>
    </source>
</evidence>
<evidence type="ECO:0000255" key="3">
    <source>
        <dbReference type="PROSITE-ProRule" id="PRU00145"/>
    </source>
</evidence>
<evidence type="ECO:0000256" key="4">
    <source>
        <dbReference type="SAM" id="MobiDB-lite"/>
    </source>
</evidence>
<evidence type="ECO:0000305" key="5"/>
<gene>
    <name type="primary">exoc8</name>
</gene>
<reference key="1">
    <citation type="submission" date="2004-11" db="EMBL/GenBank/DDBJ databases">
        <authorList>
            <consortium name="NIH - Xenopus Gene Collection (XGC) project"/>
        </authorList>
    </citation>
    <scope>NUCLEOTIDE SEQUENCE [LARGE SCALE MRNA]</scope>
    <source>
        <tissue>Oocyte</tissue>
    </source>
</reference>
<organism>
    <name type="scientific">Xenopus laevis</name>
    <name type="common">African clawed frog</name>
    <dbReference type="NCBI Taxonomy" id="8355"/>
    <lineage>
        <taxon>Eukaryota</taxon>
        <taxon>Metazoa</taxon>
        <taxon>Chordata</taxon>
        <taxon>Craniata</taxon>
        <taxon>Vertebrata</taxon>
        <taxon>Euteleostomi</taxon>
        <taxon>Amphibia</taxon>
        <taxon>Batrachia</taxon>
        <taxon>Anura</taxon>
        <taxon>Pipoidea</taxon>
        <taxon>Pipidae</taxon>
        <taxon>Xenopodinae</taxon>
        <taxon>Xenopus</taxon>
        <taxon>Xenopus</taxon>
    </lineage>
</organism>
<accession>Q5U247</accession>
<comment type="function">
    <text evidence="1">Component of the exocyst complex involved in the docking of exocytic vesicles with fusion sites on the plasma membrane.</text>
</comment>
<comment type="subunit">
    <text evidence="2">The exocyst complex is composed of exoc1, exoc2, exoc3, exoc4, exoc5, exoc6, exoc7 and exoc8.</text>
</comment>
<comment type="subcellular location">
    <subcellularLocation>
        <location evidence="2">Cytoplasm</location>
    </subcellularLocation>
    <subcellularLocation>
        <location evidence="2">Cytoplasm</location>
        <location evidence="2">Perinuclear region</location>
    </subcellularLocation>
    <subcellularLocation>
        <location evidence="2">Cell projection</location>
        <location evidence="2">Growth cone</location>
    </subcellularLocation>
    <subcellularLocation>
        <location evidence="2">Cell projection</location>
    </subcellularLocation>
</comment>
<comment type="similarity">
    <text evidence="5">Belongs to the EXO84 family.</text>
</comment>
<feature type="chain" id="PRO_0000227554" description="Exocyst complex component 8">
    <location>
        <begin position="1"/>
        <end position="685"/>
    </location>
</feature>
<feature type="domain" description="PH" evidence="3">
    <location>
        <begin position="151"/>
        <end position="251"/>
    </location>
</feature>
<feature type="region of interest" description="Disordered" evidence="4">
    <location>
        <begin position="254"/>
        <end position="273"/>
    </location>
</feature>
<feature type="compositionally biased region" description="Basic and acidic residues" evidence="4">
    <location>
        <begin position="254"/>
        <end position="263"/>
    </location>
</feature>
<protein>
    <recommendedName>
        <fullName>Exocyst complex component 8</fullName>
    </recommendedName>
</protein>
<keyword id="KW-0966">Cell projection</keyword>
<keyword id="KW-0963">Cytoplasm</keyword>
<keyword id="KW-0268">Exocytosis</keyword>
<keyword id="KW-0653">Protein transport</keyword>
<keyword id="KW-1185">Reference proteome</keyword>
<keyword id="KW-0813">Transport</keyword>
<dbReference type="EMBL" id="BC086283">
    <property type="protein sequence ID" value="AAH86283.1"/>
    <property type="molecule type" value="mRNA"/>
</dbReference>
<dbReference type="RefSeq" id="NP_001090265.1">
    <property type="nucleotide sequence ID" value="NM_001096796.1"/>
</dbReference>
<dbReference type="SMR" id="Q5U247"/>
<dbReference type="DNASU" id="779171"/>
<dbReference type="GeneID" id="779171"/>
<dbReference type="KEGG" id="xla:779171"/>
<dbReference type="AGR" id="Xenbase:XB-GENE-995735"/>
<dbReference type="CTD" id="779171"/>
<dbReference type="Xenbase" id="XB-GENE-995735">
    <property type="gene designation" value="exoc8.S"/>
</dbReference>
<dbReference type="OMA" id="AAWLPNR"/>
<dbReference type="OrthoDB" id="642193at2759"/>
<dbReference type="Proteomes" id="UP000186698">
    <property type="component" value="Chromosome 5S"/>
</dbReference>
<dbReference type="Bgee" id="779171">
    <property type="expression patterns" value="Expressed in zone of skin and 19 other cell types or tissues"/>
</dbReference>
<dbReference type="GO" id="GO:0000145">
    <property type="term" value="C:exocyst"/>
    <property type="evidence" value="ECO:0000318"/>
    <property type="project" value="GO_Central"/>
</dbReference>
<dbReference type="GO" id="GO:0030426">
    <property type="term" value="C:growth cone"/>
    <property type="evidence" value="ECO:0007669"/>
    <property type="project" value="UniProtKB-SubCell"/>
</dbReference>
<dbReference type="GO" id="GO:0048471">
    <property type="term" value="C:perinuclear region of cytoplasm"/>
    <property type="evidence" value="ECO:0007669"/>
    <property type="project" value="UniProtKB-SubCell"/>
</dbReference>
<dbReference type="GO" id="GO:0006887">
    <property type="term" value="P:exocytosis"/>
    <property type="evidence" value="ECO:0007669"/>
    <property type="project" value="UniProtKB-KW"/>
</dbReference>
<dbReference type="GO" id="GO:0006893">
    <property type="term" value="P:Golgi to plasma membrane transport"/>
    <property type="evidence" value="ECO:0000318"/>
    <property type="project" value="GO_Central"/>
</dbReference>
<dbReference type="GO" id="GO:0008104">
    <property type="term" value="P:protein localization"/>
    <property type="evidence" value="ECO:0000318"/>
    <property type="project" value="GO_Central"/>
</dbReference>
<dbReference type="GO" id="GO:0015031">
    <property type="term" value="P:protein transport"/>
    <property type="evidence" value="ECO:0007669"/>
    <property type="project" value="UniProtKB-KW"/>
</dbReference>
<dbReference type="CDD" id="cd01226">
    <property type="entry name" value="PH_RalBD_exo84"/>
    <property type="match status" value="1"/>
</dbReference>
<dbReference type="FunFam" id="1.20.58.1220:FF:000002">
    <property type="entry name" value="Exocyst complex component 8"/>
    <property type="match status" value="1"/>
</dbReference>
<dbReference type="FunFam" id="2.30.29.30:FF:000180">
    <property type="entry name" value="Exocyst complex component 8"/>
    <property type="match status" value="1"/>
</dbReference>
<dbReference type="FunFam" id="1.20.58.1210:FF:000001">
    <property type="entry name" value="exocyst complex component 8"/>
    <property type="match status" value="1"/>
</dbReference>
<dbReference type="Gene3D" id="1.20.58.1220">
    <property type="entry name" value="Exo84p, C-terminal helical domain"/>
    <property type="match status" value="1"/>
</dbReference>
<dbReference type="Gene3D" id="1.20.58.1210">
    <property type="entry name" value="Exo84p, N-terminal helical domain"/>
    <property type="match status" value="1"/>
</dbReference>
<dbReference type="Gene3D" id="2.30.29.30">
    <property type="entry name" value="Pleckstrin-homology domain (PH domain)/Phosphotyrosine-binding domain (PTB)"/>
    <property type="match status" value="1"/>
</dbReference>
<dbReference type="InterPro" id="IPR016159">
    <property type="entry name" value="Cullin_repeat-like_dom_sf"/>
</dbReference>
<dbReference type="InterPro" id="IPR033961">
    <property type="entry name" value="Exo84"/>
</dbReference>
<dbReference type="InterPro" id="IPR032403">
    <property type="entry name" value="Exo84_C"/>
</dbReference>
<dbReference type="InterPro" id="IPR042561">
    <property type="entry name" value="Exo84_C_1"/>
</dbReference>
<dbReference type="InterPro" id="IPR042560">
    <property type="entry name" value="Exo84_C_2"/>
</dbReference>
<dbReference type="InterPro" id="IPR011993">
    <property type="entry name" value="PH-like_dom_sf"/>
</dbReference>
<dbReference type="InterPro" id="IPR001849">
    <property type="entry name" value="PH_domain"/>
</dbReference>
<dbReference type="PANTHER" id="PTHR21426">
    <property type="entry name" value="EXOCYST COMPLEX COMPONENT 8"/>
    <property type="match status" value="1"/>
</dbReference>
<dbReference type="PANTHER" id="PTHR21426:SF12">
    <property type="entry name" value="EXOCYST COMPLEX COMPONENT 8"/>
    <property type="match status" value="1"/>
</dbReference>
<dbReference type="Pfam" id="PF16528">
    <property type="entry name" value="Exo84_C"/>
    <property type="match status" value="1"/>
</dbReference>
<dbReference type="Pfam" id="PF08700">
    <property type="entry name" value="VPS51_Exo84_N"/>
    <property type="match status" value="1"/>
</dbReference>
<dbReference type="SMART" id="SM00233">
    <property type="entry name" value="PH"/>
    <property type="match status" value="1"/>
</dbReference>
<dbReference type="SUPFAM" id="SSF74788">
    <property type="entry name" value="Cullin repeat-like"/>
    <property type="match status" value="1"/>
</dbReference>
<dbReference type="SUPFAM" id="SSF50729">
    <property type="entry name" value="PH domain-like"/>
    <property type="match status" value="1"/>
</dbReference>
<dbReference type="PROSITE" id="PS50003">
    <property type="entry name" value="PH_DOMAIN"/>
    <property type="match status" value="1"/>
</dbReference>
<name>EXOC8_XENLA</name>
<proteinExistence type="evidence at transcript level"/>
<sequence>MAEGGGSVQRLRRQLESNSFQAEQYVKLLSQQSDGDRDLQEHRQRIQSLADETAQSLKRNVYQNYRQFIETAKEISYLEGEMYQLSHILTEQKSIMESVTQALLYTDRSEAARELQTAFPKEAEEGKVRNLTTLLEKVEGCKNLLETPGRYLVYNGDLTEFDVDNMALIQKVHAFLMNDCLLIATSVPNRRGIYKYNALHNLDDLAVVNVKENPPMKDMFKILMFPESRIFQAENAKIKKEWLEILEQTKKNKALNEKQKQEETTPQLPVVPEIPANPFIDEDGTFDEVEVDLTIDWIQELPEDLDVCIAQRNFEGAVDLLDKLNSYLEDKPLTHPVKELKSKVDERVRQLTDVLVFELSPDRSLRGGPKATRRAVSQLVRLGQSTKACELFLKNQAAAVQTAIRQLRIEGATLLYIHKLCNVFFTSLLETAKEFEMDFAENHGCYSAFIVWSRLALKMFVDAFSKQVFDSKESLSTVAECVKVAKEHCKQLSEIGLDLTFILHTLLVKDIKAALQSYKDIVIEATKHRNSEEMWRRMNLMTPEVLGKLREEMRNCGINNFDQYTGDDCWVNISYTIVAFTKQTMAFLEEALKLYFPELHMVLLECLMEIILVAIQHVDYSLRCEQESEKKAFIRQNASFLYENVLVVVEKRFEEGVGKPAKQLQELRNSSRLVRVNPESTTSVV</sequence>